<organism>
    <name type="scientific">Actinobacillus pleuropneumoniae serotype 5b (strain L20)</name>
    <dbReference type="NCBI Taxonomy" id="416269"/>
    <lineage>
        <taxon>Bacteria</taxon>
        <taxon>Pseudomonadati</taxon>
        <taxon>Pseudomonadota</taxon>
        <taxon>Gammaproteobacteria</taxon>
        <taxon>Pasteurellales</taxon>
        <taxon>Pasteurellaceae</taxon>
        <taxon>Actinobacillus</taxon>
    </lineage>
</organism>
<sequence>MAWVQIRLNSTDKQAEQISDFLEEIGAVSVTFMDSQDTPIFEPLPGETRLWGNTDVVGLFDAETDMKAIVEALIASRLVEADFAHKIEQIEDKDWEREWMDNFHPMQFGKRLWICPSWREVPDPNAVNVMLDPGLAFGTGTHPTTALCLQWLDSLDLTGKTVIDFGCGSGILAIAALKLGAKQAIGIDIDPQAILASGNNAEANGVADRLQLFLAKDQPQDLQADVVVANILAGPLKELAPNIITLVKPQGDLGLSGILATQAESVCEAYAPDFNLDPVVEKEEWCRITGVKK</sequence>
<keyword id="KW-0963">Cytoplasm</keyword>
<keyword id="KW-0489">Methyltransferase</keyword>
<keyword id="KW-1185">Reference proteome</keyword>
<keyword id="KW-0949">S-adenosyl-L-methionine</keyword>
<keyword id="KW-0808">Transferase</keyword>
<name>PRMA_ACTP2</name>
<proteinExistence type="inferred from homology"/>
<protein>
    <recommendedName>
        <fullName evidence="1">Ribosomal protein L11 methyltransferase</fullName>
        <shortName evidence="1">L11 Mtase</shortName>
        <ecNumber evidence="1">2.1.1.-</ecNumber>
    </recommendedName>
</protein>
<dbReference type="EC" id="2.1.1.-" evidence="1"/>
<dbReference type="EMBL" id="CP000569">
    <property type="protein sequence ID" value="ABN74621.1"/>
    <property type="molecule type" value="Genomic_DNA"/>
</dbReference>
<dbReference type="RefSeq" id="WP_005608878.1">
    <property type="nucleotide sequence ID" value="NC_009053.1"/>
</dbReference>
<dbReference type="SMR" id="A3N2I5"/>
<dbReference type="STRING" id="416269.APL_1537"/>
<dbReference type="EnsemblBacteria" id="ABN74621">
    <property type="protein sequence ID" value="ABN74621"/>
    <property type="gene ID" value="APL_1537"/>
</dbReference>
<dbReference type="KEGG" id="apl:APL_1537"/>
<dbReference type="eggNOG" id="COG2264">
    <property type="taxonomic scope" value="Bacteria"/>
</dbReference>
<dbReference type="HOGENOM" id="CLU_049382_4_1_6"/>
<dbReference type="Proteomes" id="UP000001432">
    <property type="component" value="Chromosome"/>
</dbReference>
<dbReference type="GO" id="GO:0005829">
    <property type="term" value="C:cytosol"/>
    <property type="evidence" value="ECO:0007669"/>
    <property type="project" value="TreeGrafter"/>
</dbReference>
<dbReference type="GO" id="GO:0016279">
    <property type="term" value="F:protein-lysine N-methyltransferase activity"/>
    <property type="evidence" value="ECO:0007669"/>
    <property type="project" value="TreeGrafter"/>
</dbReference>
<dbReference type="GO" id="GO:0032259">
    <property type="term" value="P:methylation"/>
    <property type="evidence" value="ECO:0007669"/>
    <property type="project" value="UniProtKB-KW"/>
</dbReference>
<dbReference type="CDD" id="cd02440">
    <property type="entry name" value="AdoMet_MTases"/>
    <property type="match status" value="1"/>
</dbReference>
<dbReference type="Gene3D" id="3.40.50.150">
    <property type="entry name" value="Vaccinia Virus protein VP39"/>
    <property type="match status" value="1"/>
</dbReference>
<dbReference type="HAMAP" id="MF_00735">
    <property type="entry name" value="Methyltr_PrmA"/>
    <property type="match status" value="1"/>
</dbReference>
<dbReference type="InterPro" id="IPR050078">
    <property type="entry name" value="Ribosomal_L11_MeTrfase_PrmA"/>
</dbReference>
<dbReference type="InterPro" id="IPR004498">
    <property type="entry name" value="Ribosomal_PrmA_MeTrfase"/>
</dbReference>
<dbReference type="InterPro" id="IPR029063">
    <property type="entry name" value="SAM-dependent_MTases_sf"/>
</dbReference>
<dbReference type="NCBIfam" id="TIGR00406">
    <property type="entry name" value="prmA"/>
    <property type="match status" value="1"/>
</dbReference>
<dbReference type="PANTHER" id="PTHR43648">
    <property type="entry name" value="ELECTRON TRANSFER FLAVOPROTEIN BETA SUBUNIT LYSINE METHYLTRANSFERASE"/>
    <property type="match status" value="1"/>
</dbReference>
<dbReference type="PANTHER" id="PTHR43648:SF1">
    <property type="entry name" value="ELECTRON TRANSFER FLAVOPROTEIN BETA SUBUNIT LYSINE METHYLTRANSFERASE"/>
    <property type="match status" value="1"/>
</dbReference>
<dbReference type="Pfam" id="PF06325">
    <property type="entry name" value="PrmA"/>
    <property type="match status" value="1"/>
</dbReference>
<dbReference type="PIRSF" id="PIRSF000401">
    <property type="entry name" value="RPL11_MTase"/>
    <property type="match status" value="1"/>
</dbReference>
<dbReference type="SUPFAM" id="SSF53335">
    <property type="entry name" value="S-adenosyl-L-methionine-dependent methyltransferases"/>
    <property type="match status" value="1"/>
</dbReference>
<gene>
    <name evidence="1" type="primary">prmA</name>
    <name type="ordered locus">APL_1537</name>
</gene>
<reference key="1">
    <citation type="journal article" date="2008" name="J. Bacteriol.">
        <title>The complete genome sequence of Actinobacillus pleuropneumoniae L20 (serotype 5b).</title>
        <authorList>
            <person name="Foote S.J."/>
            <person name="Bosse J.T."/>
            <person name="Bouevitch A.B."/>
            <person name="Langford P.R."/>
            <person name="Young N.M."/>
            <person name="Nash J.H.E."/>
        </authorList>
    </citation>
    <scope>NUCLEOTIDE SEQUENCE [LARGE SCALE GENOMIC DNA]</scope>
    <source>
        <strain>L20</strain>
    </source>
</reference>
<feature type="chain" id="PRO_1000045979" description="Ribosomal protein L11 methyltransferase">
    <location>
        <begin position="1"/>
        <end position="293"/>
    </location>
</feature>
<feature type="binding site" evidence="1">
    <location>
        <position position="145"/>
    </location>
    <ligand>
        <name>S-adenosyl-L-methionine</name>
        <dbReference type="ChEBI" id="CHEBI:59789"/>
    </ligand>
</feature>
<feature type="binding site" evidence="1">
    <location>
        <position position="166"/>
    </location>
    <ligand>
        <name>S-adenosyl-L-methionine</name>
        <dbReference type="ChEBI" id="CHEBI:59789"/>
    </ligand>
</feature>
<feature type="binding site" evidence="1">
    <location>
        <position position="188"/>
    </location>
    <ligand>
        <name>S-adenosyl-L-methionine</name>
        <dbReference type="ChEBI" id="CHEBI:59789"/>
    </ligand>
</feature>
<feature type="binding site" evidence="1">
    <location>
        <position position="230"/>
    </location>
    <ligand>
        <name>S-adenosyl-L-methionine</name>
        <dbReference type="ChEBI" id="CHEBI:59789"/>
    </ligand>
</feature>
<comment type="function">
    <text evidence="1">Methylates ribosomal protein L11.</text>
</comment>
<comment type="catalytic activity">
    <reaction evidence="1">
        <text>L-lysyl-[protein] + 3 S-adenosyl-L-methionine = N(6),N(6),N(6)-trimethyl-L-lysyl-[protein] + 3 S-adenosyl-L-homocysteine + 3 H(+)</text>
        <dbReference type="Rhea" id="RHEA:54192"/>
        <dbReference type="Rhea" id="RHEA-COMP:9752"/>
        <dbReference type="Rhea" id="RHEA-COMP:13826"/>
        <dbReference type="ChEBI" id="CHEBI:15378"/>
        <dbReference type="ChEBI" id="CHEBI:29969"/>
        <dbReference type="ChEBI" id="CHEBI:57856"/>
        <dbReference type="ChEBI" id="CHEBI:59789"/>
        <dbReference type="ChEBI" id="CHEBI:61961"/>
    </reaction>
</comment>
<comment type="subcellular location">
    <subcellularLocation>
        <location evidence="1">Cytoplasm</location>
    </subcellularLocation>
</comment>
<comment type="similarity">
    <text evidence="1">Belongs to the methyltransferase superfamily. PrmA family.</text>
</comment>
<evidence type="ECO:0000255" key="1">
    <source>
        <dbReference type="HAMAP-Rule" id="MF_00735"/>
    </source>
</evidence>
<accession>A3N2I5</accession>